<name>RL15_MACFA</name>
<organism>
    <name type="scientific">Macaca fascicularis</name>
    <name type="common">Crab-eating macaque</name>
    <name type="synonym">Cynomolgus monkey</name>
    <dbReference type="NCBI Taxonomy" id="9541"/>
    <lineage>
        <taxon>Eukaryota</taxon>
        <taxon>Metazoa</taxon>
        <taxon>Chordata</taxon>
        <taxon>Craniata</taxon>
        <taxon>Vertebrata</taxon>
        <taxon>Euteleostomi</taxon>
        <taxon>Mammalia</taxon>
        <taxon>Eutheria</taxon>
        <taxon>Euarchontoglires</taxon>
        <taxon>Primates</taxon>
        <taxon>Haplorrhini</taxon>
        <taxon>Catarrhini</taxon>
        <taxon>Cercopithecidae</taxon>
        <taxon>Cercopithecinae</taxon>
        <taxon>Macaca</taxon>
    </lineage>
</organism>
<dbReference type="EMBL" id="AB169632">
    <property type="protein sequence ID" value="BAE01713.1"/>
    <property type="molecule type" value="mRNA"/>
</dbReference>
<dbReference type="RefSeq" id="NP_001272196.1">
    <property type="nucleotide sequence ID" value="NM_001285267.1"/>
</dbReference>
<dbReference type="RefSeq" id="XP_005545700.1">
    <property type="nucleotide sequence ID" value="XM_005545643.4"/>
</dbReference>
<dbReference type="RefSeq" id="XP_005545701.1">
    <property type="nucleotide sequence ID" value="XM_005545644.4"/>
</dbReference>
<dbReference type="RefSeq" id="XP_005545703.1">
    <property type="nucleotide sequence ID" value="XM_005545646.2"/>
</dbReference>
<dbReference type="RefSeq" id="XP_045242955.1">
    <property type="nucleotide sequence ID" value="XM_045387020.2"/>
</dbReference>
<dbReference type="RefSeq" id="XP_045242956.1">
    <property type="nucleotide sequence ID" value="XM_045387021.2"/>
</dbReference>
<dbReference type="RefSeq" id="XP_045242958.1">
    <property type="nucleotide sequence ID" value="XM_045387023.2"/>
</dbReference>
<dbReference type="SMR" id="Q4R5B2"/>
<dbReference type="STRING" id="9541.ENSMFAP00000024715"/>
<dbReference type="Ensembl" id="ENSMFAT00000032844.2">
    <property type="protein sequence ID" value="ENSMFAP00000024702.1"/>
    <property type="gene ID" value="ENSMFAG00000043886.2"/>
</dbReference>
<dbReference type="GeneID" id="101926126"/>
<dbReference type="CTD" id="6138"/>
<dbReference type="VEuPathDB" id="HostDB:ENSMFAG00000043886"/>
<dbReference type="eggNOG" id="KOG1678">
    <property type="taxonomic scope" value="Eukaryota"/>
</dbReference>
<dbReference type="GeneTree" id="ENSGT00910000144184"/>
<dbReference type="Proteomes" id="UP000233100">
    <property type="component" value="Chromosome 2"/>
</dbReference>
<dbReference type="Bgee" id="ENSMFAG00000043886">
    <property type="expression patterns" value="Expressed in lymph node and 13 other cell types or tissues"/>
</dbReference>
<dbReference type="GO" id="GO:0022625">
    <property type="term" value="C:cytosolic large ribosomal subunit"/>
    <property type="evidence" value="ECO:0007669"/>
    <property type="project" value="Ensembl"/>
</dbReference>
<dbReference type="GO" id="GO:0005634">
    <property type="term" value="C:nucleus"/>
    <property type="evidence" value="ECO:0007669"/>
    <property type="project" value="Ensembl"/>
</dbReference>
<dbReference type="GO" id="GO:0045202">
    <property type="term" value="C:synapse"/>
    <property type="evidence" value="ECO:0007669"/>
    <property type="project" value="Ensembl"/>
</dbReference>
<dbReference type="GO" id="GO:0003723">
    <property type="term" value="F:RNA binding"/>
    <property type="evidence" value="ECO:0007669"/>
    <property type="project" value="TreeGrafter"/>
</dbReference>
<dbReference type="GO" id="GO:0003735">
    <property type="term" value="F:structural constituent of ribosome"/>
    <property type="evidence" value="ECO:0007669"/>
    <property type="project" value="Ensembl"/>
</dbReference>
<dbReference type="GO" id="GO:0002181">
    <property type="term" value="P:cytoplasmic translation"/>
    <property type="evidence" value="ECO:0007669"/>
    <property type="project" value="TreeGrafter"/>
</dbReference>
<dbReference type="FunFam" id="3.40.1120.10:FF:000001">
    <property type="entry name" value="Ribosomal protein L15"/>
    <property type="match status" value="1"/>
</dbReference>
<dbReference type="Gene3D" id="3.40.1120.10">
    <property type="entry name" value="Ribosomal protein l15e"/>
    <property type="match status" value="1"/>
</dbReference>
<dbReference type="InterPro" id="IPR024794">
    <property type="entry name" value="Rbsml_eL15_core_dom_sf"/>
</dbReference>
<dbReference type="InterPro" id="IPR000439">
    <property type="entry name" value="Ribosomal_eL15"/>
</dbReference>
<dbReference type="InterPro" id="IPR020925">
    <property type="entry name" value="Ribosomal_eL15_CS"/>
</dbReference>
<dbReference type="InterPro" id="IPR012678">
    <property type="entry name" value="Ribosomal_uL23/eL15/eS24_sf"/>
</dbReference>
<dbReference type="NCBIfam" id="NF003269">
    <property type="entry name" value="PRK04243.1"/>
    <property type="match status" value="1"/>
</dbReference>
<dbReference type="PANTHER" id="PTHR11847:SF4">
    <property type="entry name" value="LARGE RIBOSOMAL SUBUNIT PROTEIN EL15"/>
    <property type="match status" value="1"/>
</dbReference>
<dbReference type="PANTHER" id="PTHR11847">
    <property type="entry name" value="RIBOSOMAL PROTEIN L15"/>
    <property type="match status" value="1"/>
</dbReference>
<dbReference type="Pfam" id="PF00827">
    <property type="entry name" value="Ribosomal_L15e"/>
    <property type="match status" value="1"/>
</dbReference>
<dbReference type="SMART" id="SM01384">
    <property type="entry name" value="Ribosomal_L15e"/>
    <property type="match status" value="1"/>
</dbReference>
<dbReference type="SUPFAM" id="SSF54189">
    <property type="entry name" value="Ribosomal proteins S24e, L23 and L15e"/>
    <property type="match status" value="1"/>
</dbReference>
<dbReference type="PROSITE" id="PS01194">
    <property type="entry name" value="RIBOSOMAL_L15E"/>
    <property type="match status" value="1"/>
</dbReference>
<feature type="initiator methionine" description="Removed" evidence="1">
    <location>
        <position position="1"/>
    </location>
</feature>
<feature type="chain" id="PRO_0000319314" description="Large ribosomal subunit protein eL15">
    <location>
        <begin position="2"/>
        <end position="204"/>
    </location>
</feature>
<feature type="region of interest" description="Disordered" evidence="3">
    <location>
        <begin position="165"/>
        <end position="186"/>
    </location>
</feature>
<feature type="compositionally biased region" description="Basic residues" evidence="3">
    <location>
        <begin position="169"/>
        <end position="182"/>
    </location>
</feature>
<feature type="modified residue" description="Phosphoserine" evidence="2">
    <location>
        <position position="34"/>
    </location>
</feature>
<feature type="modified residue" description="Phosphoserine" evidence="1">
    <location>
        <position position="97"/>
    </location>
</feature>
<feature type="modified residue" description="Phosphoserine" evidence="1">
    <location>
        <position position="100"/>
    </location>
</feature>
<feature type="lipid moiety-binding region" description="N-myristoyl glycine" evidence="1">
    <location>
        <position position="2"/>
    </location>
</feature>
<feature type="cross-link" description="Glycyl lysine isopeptide (Lys-Gly) (interchain with G-Cter in SUMO2)" evidence="1">
    <location>
        <position position="83"/>
    </location>
</feature>
<reference key="1">
    <citation type="submission" date="2005-06" db="EMBL/GenBank/DDBJ databases">
        <title>DNA sequences of macaque genes expressed in brain or testis and its evolutionary implications.</title>
        <authorList>
            <consortium name="International consortium for macaque cDNA sequencing and analysis"/>
        </authorList>
    </citation>
    <scope>NUCLEOTIDE SEQUENCE [LARGE SCALE MRNA]</scope>
    <source>
        <tissue>Temporal cortex</tissue>
    </source>
</reference>
<accession>Q4R5B2</accession>
<keyword id="KW-0963">Cytoplasm</keyword>
<keyword id="KW-1017">Isopeptide bond</keyword>
<keyword id="KW-0449">Lipoprotein</keyword>
<keyword id="KW-0519">Myristate</keyword>
<keyword id="KW-0597">Phosphoprotein</keyword>
<keyword id="KW-1185">Reference proteome</keyword>
<keyword id="KW-0687">Ribonucleoprotein</keyword>
<keyword id="KW-0689">Ribosomal protein</keyword>
<keyword id="KW-0832">Ubl conjugation</keyword>
<sequence length="204" mass="24146">MGAYKYIQELWRKKQSDVMRFLLRVRCWQYRQLSALHRAPRPTRPDKARRLGYKAKQGYVIYRIRVRRGGRKRPVPKGATYGKPVHHGVNQLKFARSLQSVAEERAGRHCGALRVLNSYWVGEDSTYKFFEVILIDPFHKAIRRNPDTQWITKPVHKHREMRGLTSAGRKSRGLGKGHKFHHTIGGSRRAAWRRRNTLQLHRYR</sequence>
<proteinExistence type="evidence at transcript level"/>
<evidence type="ECO:0000250" key="1">
    <source>
        <dbReference type="UniProtKB" id="P61313"/>
    </source>
</evidence>
<evidence type="ECO:0000250" key="2">
    <source>
        <dbReference type="UniProtKB" id="P61314"/>
    </source>
</evidence>
<evidence type="ECO:0000256" key="3">
    <source>
        <dbReference type="SAM" id="MobiDB-lite"/>
    </source>
</evidence>
<evidence type="ECO:0000305" key="4"/>
<gene>
    <name type="primary">RPL15</name>
    <name type="ORF">QtrA-13002</name>
</gene>
<protein>
    <recommendedName>
        <fullName evidence="4">Large ribosomal subunit protein eL15</fullName>
    </recommendedName>
    <alternativeName>
        <fullName>60S ribosomal protein L15</fullName>
    </alternativeName>
</protein>
<comment type="function">
    <text evidence="1">Component of the large ribosomal subunit. The ribosome is a large ribonucleoprotein complex responsible for the synthesis of proteins in the cell.</text>
</comment>
<comment type="subunit">
    <text evidence="1">Component of the large ribosomal subunit. Interacts with IFIT1 (via TPR repeats 1-4).</text>
</comment>
<comment type="subcellular location">
    <subcellularLocation>
        <location evidence="1">Cytoplasm</location>
    </subcellularLocation>
</comment>
<comment type="similarity">
    <text evidence="4">Belongs to the eukaryotic ribosomal protein eL15 family.</text>
</comment>